<protein>
    <recommendedName>
        <fullName>L-type lectin-domain containing receptor kinase V.9</fullName>
        <shortName>LecRK-V.9</shortName>
        <ecNumber>2.7.11.1</ecNumber>
    </recommendedName>
</protein>
<gene>
    <name type="primary">LECRK59</name>
    <name type="ordered locus">At4g29050</name>
    <name type="ORF">F19B15.80</name>
</gene>
<dbReference type="EC" id="2.7.11.1"/>
<dbReference type="EMBL" id="AL078470">
    <property type="protein sequence ID" value="CAB43919.1"/>
    <property type="molecule type" value="Genomic_DNA"/>
</dbReference>
<dbReference type="EMBL" id="AL161574">
    <property type="protein sequence ID" value="CAB79663.1"/>
    <property type="molecule type" value="Genomic_DNA"/>
</dbReference>
<dbReference type="EMBL" id="CP002687">
    <property type="protein sequence ID" value="AEE85579.1"/>
    <property type="molecule type" value="Genomic_DNA"/>
</dbReference>
<dbReference type="EMBL" id="AK226636">
    <property type="protein sequence ID" value="BAE98747.1"/>
    <property type="molecule type" value="mRNA"/>
</dbReference>
<dbReference type="EMBL" id="BX839938">
    <property type="status" value="NOT_ANNOTATED_CDS"/>
    <property type="molecule type" value="mRNA"/>
</dbReference>
<dbReference type="PIR" id="T08960">
    <property type="entry name" value="T08960"/>
</dbReference>
<dbReference type="RefSeq" id="NP_194634.1">
    <molecule id="Q9SZD5-1"/>
    <property type="nucleotide sequence ID" value="NM_119049.3"/>
</dbReference>
<dbReference type="SMR" id="Q9SZD5"/>
<dbReference type="FunCoup" id="Q9SZD5">
    <property type="interactions" value="17"/>
</dbReference>
<dbReference type="STRING" id="3702.Q9SZD5"/>
<dbReference type="GlyCosmos" id="Q9SZD5">
    <property type="glycosylation" value="5 sites, No reported glycans"/>
</dbReference>
<dbReference type="GlyGen" id="Q9SZD5">
    <property type="glycosylation" value="5 sites"/>
</dbReference>
<dbReference type="PaxDb" id="3702-AT4G29050.1"/>
<dbReference type="EnsemblPlants" id="AT4G29050.1">
    <molecule id="Q9SZD5-1"/>
    <property type="protein sequence ID" value="AT4G29050.1"/>
    <property type="gene ID" value="AT4G29050"/>
</dbReference>
<dbReference type="GeneID" id="829026"/>
<dbReference type="Gramene" id="AT4G29050.1">
    <molecule id="Q9SZD5-1"/>
    <property type="protein sequence ID" value="AT4G29050.1"/>
    <property type="gene ID" value="AT4G29050"/>
</dbReference>
<dbReference type="KEGG" id="ath:AT4G29050"/>
<dbReference type="Araport" id="AT4G29050"/>
<dbReference type="TAIR" id="AT4G29050">
    <property type="gene designation" value="LECRK-V.9"/>
</dbReference>
<dbReference type="eggNOG" id="ENOG502QTAM">
    <property type="taxonomic scope" value="Eukaryota"/>
</dbReference>
<dbReference type="HOGENOM" id="CLU_000288_62_3_1"/>
<dbReference type="InParanoid" id="Q9SZD5"/>
<dbReference type="OMA" id="NASHYIM"/>
<dbReference type="PhylomeDB" id="Q9SZD5"/>
<dbReference type="PRO" id="PR:Q9SZD5"/>
<dbReference type="Proteomes" id="UP000006548">
    <property type="component" value="Chromosome 4"/>
</dbReference>
<dbReference type="ExpressionAtlas" id="Q9SZD5">
    <property type="expression patterns" value="baseline and differential"/>
</dbReference>
<dbReference type="GO" id="GO:0005886">
    <property type="term" value="C:plasma membrane"/>
    <property type="evidence" value="ECO:0000250"/>
    <property type="project" value="UniProtKB"/>
</dbReference>
<dbReference type="GO" id="GO:0005524">
    <property type="term" value="F:ATP binding"/>
    <property type="evidence" value="ECO:0007669"/>
    <property type="project" value="UniProtKB-KW"/>
</dbReference>
<dbReference type="GO" id="GO:0030246">
    <property type="term" value="F:carbohydrate binding"/>
    <property type="evidence" value="ECO:0007669"/>
    <property type="project" value="UniProtKB-KW"/>
</dbReference>
<dbReference type="GO" id="GO:0106310">
    <property type="term" value="F:protein serine kinase activity"/>
    <property type="evidence" value="ECO:0007669"/>
    <property type="project" value="RHEA"/>
</dbReference>
<dbReference type="GO" id="GO:0004674">
    <property type="term" value="F:protein serine/threonine kinase activity"/>
    <property type="evidence" value="ECO:0007669"/>
    <property type="project" value="UniProtKB-KW"/>
</dbReference>
<dbReference type="CDD" id="cd06899">
    <property type="entry name" value="lectin_legume_LecRK_Arcelin_ConA"/>
    <property type="match status" value="1"/>
</dbReference>
<dbReference type="CDD" id="cd14066">
    <property type="entry name" value="STKc_IRAK"/>
    <property type="match status" value="1"/>
</dbReference>
<dbReference type="FunFam" id="1.10.510.10:FF:000108">
    <property type="entry name" value="L-type lectin-domain containing receptor kinase S.4"/>
    <property type="match status" value="1"/>
</dbReference>
<dbReference type="FunFam" id="2.60.120.200:FF:000096">
    <property type="entry name" value="L-type lectin-domain containing receptor kinase V.9"/>
    <property type="match status" value="1"/>
</dbReference>
<dbReference type="FunFam" id="3.30.200.20:FF:000112">
    <property type="entry name" value="Lectin-domain containing receptor kinase A4.3"/>
    <property type="match status" value="1"/>
</dbReference>
<dbReference type="Gene3D" id="2.60.120.200">
    <property type="match status" value="1"/>
</dbReference>
<dbReference type="Gene3D" id="3.30.200.20">
    <property type="entry name" value="Phosphorylase Kinase, domain 1"/>
    <property type="match status" value="1"/>
</dbReference>
<dbReference type="Gene3D" id="1.10.510.10">
    <property type="entry name" value="Transferase(Phosphotransferase) domain 1"/>
    <property type="match status" value="1"/>
</dbReference>
<dbReference type="InterPro" id="IPR013320">
    <property type="entry name" value="ConA-like_dom_sf"/>
</dbReference>
<dbReference type="InterPro" id="IPR011009">
    <property type="entry name" value="Kinase-like_dom_sf"/>
</dbReference>
<dbReference type="InterPro" id="IPR050528">
    <property type="entry name" value="L-type_Lectin-RKs"/>
</dbReference>
<dbReference type="InterPro" id="IPR019825">
    <property type="entry name" value="Lectin_legB_Mn/Ca_BS"/>
</dbReference>
<dbReference type="InterPro" id="IPR001220">
    <property type="entry name" value="Legume_lectin_dom"/>
</dbReference>
<dbReference type="InterPro" id="IPR000719">
    <property type="entry name" value="Prot_kinase_dom"/>
</dbReference>
<dbReference type="InterPro" id="IPR017441">
    <property type="entry name" value="Protein_kinase_ATP_BS"/>
</dbReference>
<dbReference type="InterPro" id="IPR008271">
    <property type="entry name" value="Ser/Thr_kinase_AS"/>
</dbReference>
<dbReference type="PANTHER" id="PTHR27007">
    <property type="match status" value="1"/>
</dbReference>
<dbReference type="Pfam" id="PF00139">
    <property type="entry name" value="Lectin_legB"/>
    <property type="match status" value="1"/>
</dbReference>
<dbReference type="Pfam" id="PF00069">
    <property type="entry name" value="Pkinase"/>
    <property type="match status" value="1"/>
</dbReference>
<dbReference type="SMART" id="SM00220">
    <property type="entry name" value="S_TKc"/>
    <property type="match status" value="1"/>
</dbReference>
<dbReference type="SUPFAM" id="SSF49899">
    <property type="entry name" value="Concanavalin A-like lectins/glucanases"/>
    <property type="match status" value="1"/>
</dbReference>
<dbReference type="SUPFAM" id="SSF56112">
    <property type="entry name" value="Protein kinase-like (PK-like)"/>
    <property type="match status" value="1"/>
</dbReference>
<dbReference type="PROSITE" id="PS00307">
    <property type="entry name" value="LECTIN_LEGUME_BETA"/>
    <property type="match status" value="1"/>
</dbReference>
<dbReference type="PROSITE" id="PS00107">
    <property type="entry name" value="PROTEIN_KINASE_ATP"/>
    <property type="match status" value="1"/>
</dbReference>
<dbReference type="PROSITE" id="PS50011">
    <property type="entry name" value="PROTEIN_KINASE_DOM"/>
    <property type="match status" value="1"/>
</dbReference>
<dbReference type="PROSITE" id="PS00108">
    <property type="entry name" value="PROTEIN_KINASE_ST"/>
    <property type="match status" value="1"/>
</dbReference>
<proteinExistence type="evidence at transcript level"/>
<name>LRK59_ARATH</name>
<organism>
    <name type="scientific">Arabidopsis thaliana</name>
    <name type="common">Mouse-ear cress</name>
    <dbReference type="NCBI Taxonomy" id="3702"/>
    <lineage>
        <taxon>Eukaryota</taxon>
        <taxon>Viridiplantae</taxon>
        <taxon>Streptophyta</taxon>
        <taxon>Embryophyta</taxon>
        <taxon>Tracheophyta</taxon>
        <taxon>Spermatophyta</taxon>
        <taxon>Magnoliopsida</taxon>
        <taxon>eudicotyledons</taxon>
        <taxon>Gunneridae</taxon>
        <taxon>Pentapetalae</taxon>
        <taxon>rosids</taxon>
        <taxon>malvids</taxon>
        <taxon>Brassicales</taxon>
        <taxon>Brassicaceae</taxon>
        <taxon>Camelineae</taxon>
        <taxon>Arabidopsis</taxon>
    </lineage>
</organism>
<comment type="catalytic activity">
    <reaction>
        <text>L-seryl-[protein] + ATP = O-phospho-L-seryl-[protein] + ADP + H(+)</text>
        <dbReference type="Rhea" id="RHEA:17989"/>
        <dbReference type="Rhea" id="RHEA-COMP:9863"/>
        <dbReference type="Rhea" id="RHEA-COMP:11604"/>
        <dbReference type="ChEBI" id="CHEBI:15378"/>
        <dbReference type="ChEBI" id="CHEBI:29999"/>
        <dbReference type="ChEBI" id="CHEBI:30616"/>
        <dbReference type="ChEBI" id="CHEBI:83421"/>
        <dbReference type="ChEBI" id="CHEBI:456216"/>
        <dbReference type="EC" id="2.7.11.1"/>
    </reaction>
</comment>
<comment type="catalytic activity">
    <reaction>
        <text>L-threonyl-[protein] + ATP = O-phospho-L-threonyl-[protein] + ADP + H(+)</text>
        <dbReference type="Rhea" id="RHEA:46608"/>
        <dbReference type="Rhea" id="RHEA-COMP:11060"/>
        <dbReference type="Rhea" id="RHEA-COMP:11605"/>
        <dbReference type="ChEBI" id="CHEBI:15378"/>
        <dbReference type="ChEBI" id="CHEBI:30013"/>
        <dbReference type="ChEBI" id="CHEBI:30616"/>
        <dbReference type="ChEBI" id="CHEBI:61977"/>
        <dbReference type="ChEBI" id="CHEBI:456216"/>
        <dbReference type="EC" id="2.7.11.1"/>
    </reaction>
</comment>
<comment type="subcellular location">
    <subcellularLocation>
        <location evidence="1">Cell membrane</location>
        <topology evidence="1">Single-pass type I membrane protein</topology>
    </subcellularLocation>
</comment>
<comment type="alternative products">
    <event type="alternative splicing"/>
    <isoform>
        <id>Q9SZD5-1</id>
        <name>1</name>
        <sequence type="displayed"/>
    </isoform>
    <isoform>
        <id>Q9SZD5-2</id>
        <name>2</name>
        <sequence type="described" ref="VSP_040343"/>
    </isoform>
</comment>
<comment type="similarity">
    <text evidence="6">In the C-terminal section; belongs to the protein kinase superfamily. Ser/Thr protein kinase family.</text>
</comment>
<comment type="similarity">
    <text evidence="6">In the N-terminal section; belongs to the leguminous lectin family.</text>
</comment>
<sequence length="669" mass="74736">MKFFVLVLLLVLQFFSNKALSQSEEGEFGFNGYLYDNSGIAITNSKGLMKLTNSSEFSYGHVFYNSPVRFKNSPNGTVSSFSTTFVFAIVSNVNALDGHGLAFVISPTKGLPYSSSSQYLGLFNLTNNGDPSNHIVAVEFDTFQNQEFDDMDNNHVGIDINSLSSEKASTAGYYEDDDGTFKNIRLINQKPIQAWIEYDSSRRQLNVTIHPIHLPKPKIPLLSLTKDLSPYLFDSMYVGFTSATGRLRSSHYILGWTFKLNGTASNIDISRLPKLPRDSRSTSVKKILAISLSLTSLAILVFLTISYMLFLKRKKLMEVLEDWEVQFGPHRFAYKDLYIATKGFRNSELLGKGGFGKVYKGTLSTSNMDIAVKKVSHDSRQGMREFVAEIATIGRLRHPNLVRLLGYCRRKGELYLVYDCMPKGSLDKFLYHQPEQSLDWSQRFKIIKDVASGLCYLHHQWVQVIIHRDIKPANVLLDDSMNGKLGDFGLAKLCEHGFDPQTSNVAGTFGYISPELSRTGKASTSSDVFAFGILMLEITCGRRPVLPRASSPSEMVLTDWVLDCWEDDILQVVDERVKQDDKYLEEQVALVLKLGLFCSHPVAAVRPSMSSVIQFLDGVAQLPNNLFDIVKARENVGAIEGFGEAAESLAEPCSVATLTFTEPFVSHGR</sequence>
<keyword id="KW-0025">Alternative splicing</keyword>
<keyword id="KW-0067">ATP-binding</keyword>
<keyword id="KW-1003">Cell membrane</keyword>
<keyword id="KW-0325">Glycoprotein</keyword>
<keyword id="KW-0418">Kinase</keyword>
<keyword id="KW-0430">Lectin</keyword>
<keyword id="KW-0472">Membrane</keyword>
<keyword id="KW-0547">Nucleotide-binding</keyword>
<keyword id="KW-0675">Receptor</keyword>
<keyword id="KW-1185">Reference proteome</keyword>
<keyword id="KW-0723">Serine/threonine-protein kinase</keyword>
<keyword id="KW-0732">Signal</keyword>
<keyword id="KW-0808">Transferase</keyword>
<keyword id="KW-0812">Transmembrane</keyword>
<keyword id="KW-1133">Transmembrane helix</keyword>
<accession>Q9SZD5</accession>
<accession>Q0WVV1</accession>
<evidence type="ECO:0000250" key="1"/>
<evidence type="ECO:0000255" key="2"/>
<evidence type="ECO:0000255" key="3">
    <source>
        <dbReference type="PROSITE-ProRule" id="PRU00159"/>
    </source>
</evidence>
<evidence type="ECO:0000255" key="4">
    <source>
        <dbReference type="PROSITE-ProRule" id="PRU10027"/>
    </source>
</evidence>
<evidence type="ECO:0000303" key="5">
    <source ref="3"/>
</evidence>
<evidence type="ECO:0000305" key="6"/>
<feature type="signal peptide" evidence="2">
    <location>
        <begin position="1"/>
        <end position="21"/>
    </location>
</feature>
<feature type="chain" id="PRO_0000403097" description="L-type lectin-domain containing receptor kinase V.9">
    <location>
        <begin position="22"/>
        <end position="669"/>
    </location>
</feature>
<feature type="topological domain" description="Extracellular" evidence="2">
    <location>
        <begin position="22"/>
        <end position="286"/>
    </location>
</feature>
<feature type="transmembrane region" description="Helical" evidence="2">
    <location>
        <begin position="287"/>
        <end position="307"/>
    </location>
</feature>
<feature type="topological domain" description="Cytoplasmic" evidence="2">
    <location>
        <begin position="308"/>
        <end position="669"/>
    </location>
</feature>
<feature type="domain" description="Protein kinase" evidence="3">
    <location>
        <begin position="344"/>
        <end position="603"/>
    </location>
</feature>
<feature type="region of interest" description="Legume-lectin like">
    <location>
        <begin position="38"/>
        <end position="259"/>
    </location>
</feature>
<feature type="active site" description="Proton acceptor" evidence="3 4">
    <location>
        <position position="469"/>
    </location>
</feature>
<feature type="binding site" evidence="3">
    <location>
        <begin position="350"/>
        <end position="358"/>
    </location>
    <ligand>
        <name>ATP</name>
        <dbReference type="ChEBI" id="CHEBI:30616"/>
    </ligand>
</feature>
<feature type="binding site" evidence="3">
    <location>
        <position position="373"/>
    </location>
    <ligand>
        <name>ATP</name>
        <dbReference type="ChEBI" id="CHEBI:30616"/>
    </ligand>
</feature>
<feature type="glycosylation site" description="N-linked (GlcNAc...) asparagine" evidence="2">
    <location>
        <position position="53"/>
    </location>
</feature>
<feature type="glycosylation site" description="N-linked (GlcNAc...) asparagine" evidence="2">
    <location>
        <position position="75"/>
    </location>
</feature>
<feature type="glycosylation site" description="N-linked (GlcNAc...) asparagine" evidence="2">
    <location>
        <position position="124"/>
    </location>
</feature>
<feature type="glycosylation site" description="N-linked (GlcNAc...) asparagine" evidence="2">
    <location>
        <position position="206"/>
    </location>
</feature>
<feature type="glycosylation site" description="N-linked (GlcNAc...) asparagine" evidence="2">
    <location>
        <position position="261"/>
    </location>
</feature>
<feature type="splice variant" id="VSP_040343" description="In isoform 2." evidence="5">
    <location>
        <begin position="1"/>
        <end position="235"/>
    </location>
</feature>
<reference key="1">
    <citation type="journal article" date="1999" name="Nature">
        <title>Sequence and analysis of chromosome 4 of the plant Arabidopsis thaliana.</title>
        <authorList>
            <person name="Mayer K.F.X."/>
            <person name="Schueller C."/>
            <person name="Wambutt R."/>
            <person name="Murphy G."/>
            <person name="Volckaert G."/>
            <person name="Pohl T."/>
            <person name="Duesterhoeft A."/>
            <person name="Stiekema W."/>
            <person name="Entian K.-D."/>
            <person name="Terryn N."/>
            <person name="Harris B."/>
            <person name="Ansorge W."/>
            <person name="Brandt P."/>
            <person name="Grivell L.A."/>
            <person name="Rieger M."/>
            <person name="Weichselgartner M."/>
            <person name="de Simone V."/>
            <person name="Obermaier B."/>
            <person name="Mache R."/>
            <person name="Mueller M."/>
            <person name="Kreis M."/>
            <person name="Delseny M."/>
            <person name="Puigdomenech P."/>
            <person name="Watson M."/>
            <person name="Schmidtheini T."/>
            <person name="Reichert B."/>
            <person name="Portetelle D."/>
            <person name="Perez-Alonso M."/>
            <person name="Boutry M."/>
            <person name="Bancroft I."/>
            <person name="Vos P."/>
            <person name="Hoheisel J."/>
            <person name="Zimmermann W."/>
            <person name="Wedler H."/>
            <person name="Ridley P."/>
            <person name="Langham S.-A."/>
            <person name="McCullagh B."/>
            <person name="Bilham L."/>
            <person name="Robben J."/>
            <person name="van der Schueren J."/>
            <person name="Grymonprez B."/>
            <person name="Chuang Y.-J."/>
            <person name="Vandenbussche F."/>
            <person name="Braeken M."/>
            <person name="Weltjens I."/>
            <person name="Voet M."/>
            <person name="Bastiaens I."/>
            <person name="Aert R."/>
            <person name="Defoor E."/>
            <person name="Weitzenegger T."/>
            <person name="Bothe G."/>
            <person name="Ramsperger U."/>
            <person name="Hilbert H."/>
            <person name="Braun M."/>
            <person name="Holzer E."/>
            <person name="Brandt A."/>
            <person name="Peters S."/>
            <person name="van Staveren M."/>
            <person name="Dirkse W."/>
            <person name="Mooijman P."/>
            <person name="Klein Lankhorst R."/>
            <person name="Rose M."/>
            <person name="Hauf J."/>
            <person name="Koetter P."/>
            <person name="Berneiser S."/>
            <person name="Hempel S."/>
            <person name="Feldpausch M."/>
            <person name="Lamberth S."/>
            <person name="Van den Daele H."/>
            <person name="De Keyser A."/>
            <person name="Buysshaert C."/>
            <person name="Gielen J."/>
            <person name="Villarroel R."/>
            <person name="De Clercq R."/>
            <person name="van Montagu M."/>
            <person name="Rogers J."/>
            <person name="Cronin A."/>
            <person name="Quail M.A."/>
            <person name="Bray-Allen S."/>
            <person name="Clark L."/>
            <person name="Doggett J."/>
            <person name="Hall S."/>
            <person name="Kay M."/>
            <person name="Lennard N."/>
            <person name="McLay K."/>
            <person name="Mayes R."/>
            <person name="Pettett A."/>
            <person name="Rajandream M.A."/>
            <person name="Lyne M."/>
            <person name="Benes V."/>
            <person name="Rechmann S."/>
            <person name="Borkova D."/>
            <person name="Bloecker H."/>
            <person name="Scharfe M."/>
            <person name="Grimm M."/>
            <person name="Loehnert T.-H."/>
            <person name="Dose S."/>
            <person name="de Haan M."/>
            <person name="Maarse A.C."/>
            <person name="Schaefer M."/>
            <person name="Mueller-Auer S."/>
            <person name="Gabel C."/>
            <person name="Fuchs M."/>
            <person name="Fartmann B."/>
            <person name="Granderath K."/>
            <person name="Dauner D."/>
            <person name="Herzl A."/>
            <person name="Neumann S."/>
            <person name="Argiriou A."/>
            <person name="Vitale D."/>
            <person name="Liguori R."/>
            <person name="Piravandi E."/>
            <person name="Massenet O."/>
            <person name="Quigley F."/>
            <person name="Clabauld G."/>
            <person name="Muendlein A."/>
            <person name="Felber R."/>
            <person name="Schnabl S."/>
            <person name="Hiller R."/>
            <person name="Schmidt W."/>
            <person name="Lecharny A."/>
            <person name="Aubourg S."/>
            <person name="Chefdor F."/>
            <person name="Cooke R."/>
            <person name="Berger C."/>
            <person name="Monfort A."/>
            <person name="Casacuberta E."/>
            <person name="Gibbons T."/>
            <person name="Weber N."/>
            <person name="Vandenbol M."/>
            <person name="Bargues M."/>
            <person name="Terol J."/>
            <person name="Torres A."/>
            <person name="Perez-Perez A."/>
            <person name="Purnelle B."/>
            <person name="Bent E."/>
            <person name="Johnson S."/>
            <person name="Tacon D."/>
            <person name="Jesse T."/>
            <person name="Heijnen L."/>
            <person name="Schwarz S."/>
            <person name="Scholler P."/>
            <person name="Heber S."/>
            <person name="Francs P."/>
            <person name="Bielke C."/>
            <person name="Frishman D."/>
            <person name="Haase D."/>
            <person name="Lemcke K."/>
            <person name="Mewes H.-W."/>
            <person name="Stocker S."/>
            <person name="Zaccaria P."/>
            <person name="Bevan M."/>
            <person name="Wilson R.K."/>
            <person name="de la Bastide M."/>
            <person name="Habermann K."/>
            <person name="Parnell L."/>
            <person name="Dedhia N."/>
            <person name="Gnoj L."/>
            <person name="Schutz K."/>
            <person name="Huang E."/>
            <person name="Spiegel L."/>
            <person name="Sekhon M."/>
            <person name="Murray J."/>
            <person name="Sheet P."/>
            <person name="Cordes M."/>
            <person name="Abu-Threideh J."/>
            <person name="Stoneking T."/>
            <person name="Kalicki J."/>
            <person name="Graves T."/>
            <person name="Harmon G."/>
            <person name="Edwards J."/>
            <person name="Latreille P."/>
            <person name="Courtney L."/>
            <person name="Cloud J."/>
            <person name="Abbott A."/>
            <person name="Scott K."/>
            <person name="Johnson D."/>
            <person name="Minx P."/>
            <person name="Bentley D."/>
            <person name="Fulton B."/>
            <person name="Miller N."/>
            <person name="Greco T."/>
            <person name="Kemp K."/>
            <person name="Kramer J."/>
            <person name="Fulton L."/>
            <person name="Mardis E."/>
            <person name="Dante M."/>
            <person name="Pepin K."/>
            <person name="Hillier L.W."/>
            <person name="Nelson J."/>
            <person name="Spieth J."/>
            <person name="Ryan E."/>
            <person name="Andrews S."/>
            <person name="Geisel C."/>
            <person name="Layman D."/>
            <person name="Du H."/>
            <person name="Ali J."/>
            <person name="Berghoff A."/>
            <person name="Jones K."/>
            <person name="Drone K."/>
            <person name="Cotton M."/>
            <person name="Joshu C."/>
            <person name="Antonoiu B."/>
            <person name="Zidanic M."/>
            <person name="Strong C."/>
            <person name="Sun H."/>
            <person name="Lamar B."/>
            <person name="Yordan C."/>
            <person name="Ma P."/>
            <person name="Zhong J."/>
            <person name="Preston R."/>
            <person name="Vil D."/>
            <person name="Shekher M."/>
            <person name="Matero A."/>
            <person name="Shah R."/>
            <person name="Swaby I.K."/>
            <person name="O'Shaughnessy A."/>
            <person name="Rodriguez M."/>
            <person name="Hoffman J."/>
            <person name="Till S."/>
            <person name="Granat S."/>
            <person name="Shohdy N."/>
            <person name="Hasegawa A."/>
            <person name="Hameed A."/>
            <person name="Lodhi M."/>
            <person name="Johnson A."/>
            <person name="Chen E."/>
            <person name="Marra M.A."/>
            <person name="Martienssen R."/>
            <person name="McCombie W.R."/>
        </authorList>
    </citation>
    <scope>NUCLEOTIDE SEQUENCE [LARGE SCALE GENOMIC DNA]</scope>
    <source>
        <strain>cv. Columbia</strain>
    </source>
</reference>
<reference key="2">
    <citation type="journal article" date="2017" name="Plant J.">
        <title>Araport11: a complete reannotation of the Arabidopsis thaliana reference genome.</title>
        <authorList>
            <person name="Cheng C.Y."/>
            <person name="Krishnakumar V."/>
            <person name="Chan A.P."/>
            <person name="Thibaud-Nissen F."/>
            <person name="Schobel S."/>
            <person name="Town C.D."/>
        </authorList>
    </citation>
    <scope>GENOME REANNOTATION</scope>
    <source>
        <strain>cv. Columbia</strain>
    </source>
</reference>
<reference key="3">
    <citation type="submission" date="2006-07" db="EMBL/GenBank/DDBJ databases">
        <title>Large-scale analysis of RIKEN Arabidopsis full-length (RAFL) cDNAs.</title>
        <authorList>
            <person name="Totoki Y."/>
            <person name="Seki M."/>
            <person name="Ishida J."/>
            <person name="Nakajima M."/>
            <person name="Enju A."/>
            <person name="Kamiya A."/>
            <person name="Narusaka M."/>
            <person name="Shin-i T."/>
            <person name="Nakagawa M."/>
            <person name="Sakamoto N."/>
            <person name="Oishi K."/>
            <person name="Kohara Y."/>
            <person name="Kobayashi M."/>
            <person name="Toyoda A."/>
            <person name="Sakaki Y."/>
            <person name="Sakurai T."/>
            <person name="Iida K."/>
            <person name="Akiyama K."/>
            <person name="Satou M."/>
            <person name="Toyoda T."/>
            <person name="Konagaya A."/>
            <person name="Carninci P."/>
            <person name="Kawai J."/>
            <person name="Hayashizaki Y."/>
            <person name="Shinozaki K."/>
        </authorList>
    </citation>
    <scope>NUCLEOTIDE SEQUENCE [LARGE SCALE MRNA] (ISOFORM 2)</scope>
    <source>
        <strain>cv. Columbia</strain>
    </source>
</reference>
<reference key="4">
    <citation type="journal article" date="2004" name="Genome Res.">
        <title>Whole genome sequence comparisons and 'full-length' cDNA sequences: a combined approach to evaluate and improve Arabidopsis genome annotation.</title>
        <authorList>
            <person name="Castelli V."/>
            <person name="Aury J.-M."/>
            <person name="Jaillon O."/>
            <person name="Wincker P."/>
            <person name="Clepet C."/>
            <person name="Menard M."/>
            <person name="Cruaud C."/>
            <person name="Quetier F."/>
            <person name="Scarpelli C."/>
            <person name="Schaechter V."/>
            <person name="Temple G."/>
            <person name="Caboche M."/>
            <person name="Weissenbach J."/>
            <person name="Salanoubat M."/>
        </authorList>
    </citation>
    <scope>NUCLEOTIDE SEQUENCE [LARGE SCALE MRNA] OF 3-215 (ISOFORM 1)</scope>
    <source>
        <strain>cv. Columbia</strain>
    </source>
</reference>
<reference key="5">
    <citation type="journal article" date="2002" name="Crit. Rev. Plant Sci.">
        <title>Lectin receptor kinases in plants.</title>
        <authorList>
            <person name="Barre A."/>
            <person name="Herve C."/>
            <person name="Lescure B."/>
            <person name="Rouge P."/>
        </authorList>
    </citation>
    <scope>GENE FAMILY</scope>
</reference>
<reference key="6">
    <citation type="journal article" date="2009" name="J. Exp. Bot.">
        <title>Arabidopsis L-type lectin receptor kinases: phylogeny, classification, and expression profiles.</title>
        <authorList>
            <person name="Bouwmeester K."/>
            <person name="Govers F."/>
        </authorList>
    </citation>
    <scope>GENE FAMILY</scope>
    <scope>NOMENCLATURE</scope>
</reference>